<keyword id="KW-1003">Cell membrane</keyword>
<keyword id="KW-0133">Cell shape</keyword>
<keyword id="KW-0961">Cell wall biogenesis/degradation</keyword>
<keyword id="KW-0472">Membrane</keyword>
<keyword id="KW-0520">NAD</keyword>
<keyword id="KW-0573">Peptidoglycan synthesis</keyword>
<keyword id="KW-0812">Transmembrane</keyword>
<keyword id="KW-1133">Transmembrane helix</keyword>
<organism>
    <name type="scientific">Amycolatopsis lactamdurans</name>
    <name type="common">Nocardia lactamdurans</name>
    <dbReference type="NCBI Taxonomy" id="1913"/>
    <lineage>
        <taxon>Bacteria</taxon>
        <taxon>Bacillati</taxon>
        <taxon>Actinomycetota</taxon>
        <taxon>Actinomycetes</taxon>
        <taxon>Pseudonocardiales</taxon>
        <taxon>Pseudonocardiaceae</taxon>
        <taxon>Amycolatopsis</taxon>
    </lineage>
</organism>
<dbReference type="EMBL" id="Z13972">
    <property type="protein sequence ID" value="CAA78374.1"/>
    <property type="molecule type" value="Genomic_DNA"/>
</dbReference>
<dbReference type="PIR" id="S36189">
    <property type="entry name" value="S36189"/>
</dbReference>
<dbReference type="SMR" id="Q06317"/>
<dbReference type="GO" id="GO:0005886">
    <property type="term" value="C:plasma membrane"/>
    <property type="evidence" value="ECO:0007669"/>
    <property type="project" value="UniProtKB-SubCell"/>
</dbReference>
<dbReference type="GO" id="GO:0071555">
    <property type="term" value="P:cell wall organization"/>
    <property type="evidence" value="ECO:0007669"/>
    <property type="project" value="UniProtKB-KW"/>
</dbReference>
<dbReference type="GO" id="GO:0009252">
    <property type="term" value="P:peptidoglycan biosynthetic process"/>
    <property type="evidence" value="ECO:0007669"/>
    <property type="project" value="UniProtKB-KW"/>
</dbReference>
<dbReference type="GO" id="GO:0008360">
    <property type="term" value="P:regulation of cell shape"/>
    <property type="evidence" value="ECO:0007669"/>
    <property type="project" value="UniProtKB-KW"/>
</dbReference>
<dbReference type="Gene3D" id="3.40.710.10">
    <property type="entry name" value="DD-peptidase/beta-lactamase superfamily"/>
    <property type="match status" value="1"/>
</dbReference>
<dbReference type="InterPro" id="IPR050491">
    <property type="entry name" value="Bact_CellWall_Synth/Modif"/>
</dbReference>
<dbReference type="InterPro" id="IPR001466">
    <property type="entry name" value="Beta-lactam-related"/>
</dbReference>
<dbReference type="InterPro" id="IPR012338">
    <property type="entry name" value="Beta-lactam/transpept-like"/>
</dbReference>
<dbReference type="PANTHER" id="PTHR46825:SF9">
    <property type="entry name" value="BETA-LACTAMASE-RELATED DOMAIN-CONTAINING PROTEIN"/>
    <property type="match status" value="1"/>
</dbReference>
<dbReference type="PANTHER" id="PTHR46825">
    <property type="entry name" value="D-ALANYL-D-ALANINE-CARBOXYPEPTIDASE/ENDOPEPTIDASE AMPH"/>
    <property type="match status" value="1"/>
</dbReference>
<dbReference type="Pfam" id="PF00144">
    <property type="entry name" value="Beta-lactamase"/>
    <property type="match status" value="1"/>
</dbReference>
<dbReference type="SUPFAM" id="SSF56601">
    <property type="entry name" value="beta-lactamase/transpeptidase-like"/>
    <property type="match status" value="1"/>
</dbReference>
<comment type="function">
    <text>Involved in cell wall biosynthesis and may also act as a sensor of external penicillins.</text>
</comment>
<comment type="subcellular location">
    <subcellularLocation>
        <location>Cell membrane</location>
        <topology>Multi-pass membrane protein</topology>
    </subcellularLocation>
</comment>
<comment type="similarity">
    <text evidence="3">Belongs to the beta-lactamase family.</text>
</comment>
<evidence type="ECO:0000250" key="1"/>
<evidence type="ECO:0000255" key="2"/>
<evidence type="ECO:0000305" key="3"/>
<name>PBP4_AMYLA</name>
<feature type="chain" id="PRO_0000195467" description="Penicillin-binding protein 4">
    <location>
        <begin position="1"/>
        <end position="381"/>
    </location>
</feature>
<feature type="transmembrane region" description="Helical" evidence="2">
    <location>
        <begin position="271"/>
        <end position="291"/>
    </location>
</feature>
<feature type="transmembrane region" description="Helical" evidence="2">
    <location>
        <begin position="315"/>
        <end position="340"/>
    </location>
</feature>
<feature type="active site" description="Acyl-ester intermediate" evidence="1">
    <location>
        <position position="60"/>
    </location>
</feature>
<feature type="binding site" evidence="2">
    <location>
        <begin position="299"/>
        <end position="308"/>
    </location>
    <ligand>
        <name>NAD(+)</name>
        <dbReference type="ChEBI" id="CHEBI:57540"/>
    </ligand>
</feature>
<protein>
    <recommendedName>
        <fullName>Penicillin-binding protein 4</fullName>
        <shortName>PBP-4</shortName>
    </recommendedName>
</protein>
<sequence>MPFDHAHWQERFDALRTEHHVPGAALAVFVDGDLHELASGVLHRGTGVAVTTDSVFQSGSVAKVYTATLVMQLVDAGELRLDTRVADVLPGFAVADAEVARTVTIGRLLSHTSGIAGDFTLDTGRGDDCLARFVDACADVGQDCPPDTVISYCSTGYAILGRIVEVLTGQSWDDALRDRLFTPLGLHQSMTLPEEALRFRVAMSHLGELGTDPEPAPVWDMLPRSAGPYGRVLITAADVVRFARMHLDDGVAPDGTRVLSAASAALMRQQVAGCLDTWSFMATGWGHGWALYDWDGVPGYGHDGASGGQFSYLRVVPGSGVVAALLTNGGVATSFFTDLFRELLGELAGVRMPEVFAPPAEPRPIDVAPLAGTYEREGGAP</sequence>
<proteinExistence type="inferred from homology"/>
<reference key="1">
    <citation type="journal article" date="1993" name="EMBO J.">
        <title>Genes for a beta-lactamase, a penicillin-binding protein and a transmembrane protein are clustered with the cephamycin biosynthetic genes in Nocardia lactamdurans.</title>
        <authorList>
            <person name="Coque J.J.R."/>
            <person name="Liras P."/>
            <person name="Martin J.F."/>
        </authorList>
    </citation>
    <scope>NUCLEOTIDE SEQUENCE [GENOMIC DNA]</scope>
    <source>
        <strain>LC411</strain>
    </source>
</reference>
<accession>Q06317</accession>
<gene>
    <name type="primary">pbp</name>
</gene>